<gene>
    <name evidence="1" type="primary">gcvH</name>
    <name type="ordered locus">ACIAD1876</name>
</gene>
<reference key="1">
    <citation type="journal article" date="2004" name="Nucleic Acids Res.">
        <title>Unique features revealed by the genome sequence of Acinetobacter sp. ADP1, a versatile and naturally transformation competent bacterium.</title>
        <authorList>
            <person name="Barbe V."/>
            <person name="Vallenet D."/>
            <person name="Fonknechten N."/>
            <person name="Kreimeyer A."/>
            <person name="Oztas S."/>
            <person name="Labarre L."/>
            <person name="Cruveiller S."/>
            <person name="Robert C."/>
            <person name="Duprat S."/>
            <person name="Wincker P."/>
            <person name="Ornston L.N."/>
            <person name="Weissenbach J."/>
            <person name="Marliere P."/>
            <person name="Cohen G.N."/>
            <person name="Medigue C."/>
        </authorList>
    </citation>
    <scope>NUCLEOTIDE SEQUENCE [LARGE SCALE GENOMIC DNA]</scope>
    <source>
        <strain>ATCC 33305 / BD413 / ADP1</strain>
    </source>
</reference>
<feature type="chain" id="PRO_0000302340" description="Glycine cleavage system H protein">
    <location>
        <begin position="1"/>
        <end position="124"/>
    </location>
</feature>
<feature type="domain" description="Lipoyl-binding" evidence="2">
    <location>
        <begin position="22"/>
        <end position="104"/>
    </location>
</feature>
<feature type="modified residue" description="N6-lipoyllysine" evidence="1">
    <location>
        <position position="63"/>
    </location>
</feature>
<dbReference type="EMBL" id="CR543861">
    <property type="protein sequence ID" value="CAG68706.1"/>
    <property type="molecule type" value="Genomic_DNA"/>
</dbReference>
<dbReference type="RefSeq" id="WP_004927044.1">
    <property type="nucleotide sequence ID" value="NC_005966.1"/>
</dbReference>
<dbReference type="SMR" id="Q6FB57"/>
<dbReference type="STRING" id="202950.GCA_001485005_00485"/>
<dbReference type="GeneID" id="45234247"/>
<dbReference type="KEGG" id="aci:ACIAD1876"/>
<dbReference type="eggNOG" id="COG0509">
    <property type="taxonomic scope" value="Bacteria"/>
</dbReference>
<dbReference type="HOGENOM" id="CLU_097408_2_2_6"/>
<dbReference type="OrthoDB" id="9796712at2"/>
<dbReference type="BioCyc" id="ASP62977:ACIAD_RS08640-MONOMER"/>
<dbReference type="Proteomes" id="UP000000430">
    <property type="component" value="Chromosome"/>
</dbReference>
<dbReference type="GO" id="GO:0005829">
    <property type="term" value="C:cytosol"/>
    <property type="evidence" value="ECO:0007669"/>
    <property type="project" value="TreeGrafter"/>
</dbReference>
<dbReference type="GO" id="GO:0005960">
    <property type="term" value="C:glycine cleavage complex"/>
    <property type="evidence" value="ECO:0007669"/>
    <property type="project" value="InterPro"/>
</dbReference>
<dbReference type="GO" id="GO:0019464">
    <property type="term" value="P:glycine decarboxylation via glycine cleavage system"/>
    <property type="evidence" value="ECO:0007669"/>
    <property type="project" value="UniProtKB-UniRule"/>
</dbReference>
<dbReference type="CDD" id="cd06848">
    <property type="entry name" value="GCS_H"/>
    <property type="match status" value="1"/>
</dbReference>
<dbReference type="Gene3D" id="2.40.50.100">
    <property type="match status" value="1"/>
</dbReference>
<dbReference type="HAMAP" id="MF_00272">
    <property type="entry name" value="GcvH"/>
    <property type="match status" value="1"/>
</dbReference>
<dbReference type="InterPro" id="IPR000089">
    <property type="entry name" value="Biotin_lipoyl"/>
</dbReference>
<dbReference type="InterPro" id="IPR002930">
    <property type="entry name" value="GCV_H"/>
</dbReference>
<dbReference type="InterPro" id="IPR033753">
    <property type="entry name" value="GCV_H/Fam206"/>
</dbReference>
<dbReference type="InterPro" id="IPR017453">
    <property type="entry name" value="GCV_H_sub"/>
</dbReference>
<dbReference type="InterPro" id="IPR011053">
    <property type="entry name" value="Single_hybrid_motif"/>
</dbReference>
<dbReference type="NCBIfam" id="TIGR00527">
    <property type="entry name" value="gcvH"/>
    <property type="match status" value="1"/>
</dbReference>
<dbReference type="NCBIfam" id="NF002270">
    <property type="entry name" value="PRK01202.1"/>
    <property type="match status" value="1"/>
</dbReference>
<dbReference type="PANTHER" id="PTHR11715">
    <property type="entry name" value="GLYCINE CLEAVAGE SYSTEM H PROTEIN"/>
    <property type="match status" value="1"/>
</dbReference>
<dbReference type="PANTHER" id="PTHR11715:SF3">
    <property type="entry name" value="GLYCINE CLEAVAGE SYSTEM H PROTEIN-RELATED"/>
    <property type="match status" value="1"/>
</dbReference>
<dbReference type="Pfam" id="PF01597">
    <property type="entry name" value="GCV_H"/>
    <property type="match status" value="1"/>
</dbReference>
<dbReference type="SUPFAM" id="SSF51230">
    <property type="entry name" value="Single hybrid motif"/>
    <property type="match status" value="1"/>
</dbReference>
<dbReference type="PROSITE" id="PS50968">
    <property type="entry name" value="BIOTINYL_LIPOYL"/>
    <property type="match status" value="1"/>
</dbReference>
<sequence length="124" mass="13441">MNHPSELKYATTHEWVRIEGDLIVTGISDHAQDALGDLVYVEVPEVGSHMTAGTQAGVVESVKTASDIHAPVSGTVVEVNTALEDDPDFINDEPYGKGWIYKMKPDNIADVDQLLSNTDYEAGL</sequence>
<proteinExistence type="inferred from homology"/>
<organism>
    <name type="scientific">Acinetobacter baylyi (strain ATCC 33305 / BD413 / ADP1)</name>
    <dbReference type="NCBI Taxonomy" id="62977"/>
    <lineage>
        <taxon>Bacteria</taxon>
        <taxon>Pseudomonadati</taxon>
        <taxon>Pseudomonadota</taxon>
        <taxon>Gammaproteobacteria</taxon>
        <taxon>Moraxellales</taxon>
        <taxon>Moraxellaceae</taxon>
        <taxon>Acinetobacter</taxon>
    </lineage>
</organism>
<name>GCSH_ACIAD</name>
<keyword id="KW-0450">Lipoyl</keyword>
<protein>
    <recommendedName>
        <fullName evidence="1">Glycine cleavage system H protein</fullName>
    </recommendedName>
</protein>
<accession>Q6FB57</accession>
<comment type="function">
    <text evidence="1">The glycine cleavage system catalyzes the degradation of glycine. The H protein shuttles the methylamine group of glycine from the P protein to the T protein.</text>
</comment>
<comment type="cofactor">
    <cofactor evidence="1">
        <name>(R)-lipoate</name>
        <dbReference type="ChEBI" id="CHEBI:83088"/>
    </cofactor>
    <text evidence="1">Binds 1 lipoyl cofactor covalently.</text>
</comment>
<comment type="subunit">
    <text evidence="1">The glycine cleavage system is composed of four proteins: P, T, L and H.</text>
</comment>
<comment type="similarity">
    <text evidence="1">Belongs to the GcvH family.</text>
</comment>
<evidence type="ECO:0000255" key="1">
    <source>
        <dbReference type="HAMAP-Rule" id="MF_00272"/>
    </source>
</evidence>
<evidence type="ECO:0000255" key="2">
    <source>
        <dbReference type="PROSITE-ProRule" id="PRU01066"/>
    </source>
</evidence>